<name>Y265_BUCAP</name>
<evidence type="ECO:0000255" key="1">
    <source>
        <dbReference type="HAMAP-Rule" id="MF_01067"/>
    </source>
</evidence>
<sequence>MSITIRELCNDTYHFVSKEIKIIIFISVLAAFISILINVLIKPNIHIISIIENKKFLSSHSIFDLINSMSIYEKKELLKYSIFKIFEFLISKTFLLGSIITLITHLSNHKKESIQFSLNSLCKFLPSLFILNFITTFFIQIGFMFFIFPGIFLSVLLALSPIILSFKKNNLIDCIRLSISISCKHLNIVGTSVLFWMCVKFILTTVFSNTYIISKNFIFLILNINMNIFFSILIVYLFRFYMLFLRS</sequence>
<reference key="1">
    <citation type="journal article" date="1993" name="J. Bacteriol.">
        <title>Molecular cloning and nucleotide sequence of a putative trpDC(F)BA operon in Buchnera aphidicola (endosymbiont of the aphid Schizaphis graminum).</title>
        <authorList>
            <person name="Munson M.A."/>
            <person name="Baumann P."/>
        </authorList>
    </citation>
    <scope>NUCLEOTIDE SEQUENCE [GENOMIC DNA]</scope>
</reference>
<reference key="2">
    <citation type="journal article" date="2002" name="Science">
        <title>50 million years of genomic stasis in endosymbiotic bacteria.</title>
        <authorList>
            <person name="Tamas I."/>
            <person name="Klasson L."/>
            <person name="Canbaeck B."/>
            <person name="Naeslund A.K."/>
            <person name="Eriksson A.-S."/>
            <person name="Wernegreen J.J."/>
            <person name="Sandstroem J.P."/>
            <person name="Moran N.A."/>
            <person name="Andersson S.G.E."/>
        </authorList>
    </citation>
    <scope>NUCLEOTIDE SEQUENCE [LARGE SCALE GENOMIC DNA]</scope>
    <source>
        <strain>Sg</strain>
    </source>
</reference>
<keyword id="KW-1003">Cell membrane</keyword>
<keyword id="KW-0472">Membrane</keyword>
<keyword id="KW-0812">Transmembrane</keyword>
<keyword id="KW-1133">Transmembrane helix</keyword>
<proteinExistence type="inferred from homology"/>
<feature type="chain" id="PRO_0000206512" description="UPF0259 membrane protein BUsg_265">
    <location>
        <begin position="1"/>
        <end position="247"/>
    </location>
</feature>
<feature type="transmembrane region" description="Helical" evidence="1">
    <location>
        <begin position="20"/>
        <end position="40"/>
    </location>
</feature>
<feature type="transmembrane region" description="Helical" evidence="1">
    <location>
        <begin position="82"/>
        <end position="102"/>
    </location>
</feature>
<feature type="transmembrane region" description="Helical" evidence="1">
    <location>
        <begin position="114"/>
        <end position="134"/>
    </location>
</feature>
<feature type="transmembrane region" description="Helical" evidence="1">
    <location>
        <begin position="137"/>
        <end position="157"/>
    </location>
</feature>
<feature type="transmembrane region" description="Helical" evidence="1">
    <location>
        <begin position="188"/>
        <end position="208"/>
    </location>
</feature>
<feature type="transmembrane region" description="Helical" evidence="1">
    <location>
        <begin position="217"/>
        <end position="237"/>
    </location>
</feature>
<organism>
    <name type="scientific">Buchnera aphidicola subsp. Schizaphis graminum (strain Sg)</name>
    <dbReference type="NCBI Taxonomy" id="198804"/>
    <lineage>
        <taxon>Bacteria</taxon>
        <taxon>Pseudomonadati</taxon>
        <taxon>Pseudomonadota</taxon>
        <taxon>Gammaproteobacteria</taxon>
        <taxon>Enterobacterales</taxon>
        <taxon>Erwiniaceae</taxon>
        <taxon>Buchnera</taxon>
    </lineage>
</organism>
<protein>
    <recommendedName>
        <fullName evidence="1">UPF0259 membrane protein BUsg_265</fullName>
    </recommendedName>
</protein>
<accession>P42396</accession>
<comment type="subcellular location">
    <subcellularLocation>
        <location evidence="1">Cell membrane</location>
        <topology evidence="1">Multi-pass membrane protein</topology>
    </subcellularLocation>
</comment>
<comment type="similarity">
    <text evidence="1">Belongs to the UPF0259 family.</text>
</comment>
<gene>
    <name type="ordered locus">BUsg_265</name>
</gene>
<dbReference type="EMBL" id="Z19055">
    <property type="protein sequence ID" value="CAA79504.1"/>
    <property type="molecule type" value="Genomic_DNA"/>
</dbReference>
<dbReference type="EMBL" id="AE013218">
    <property type="protein sequence ID" value="AAM67823.1"/>
    <property type="molecule type" value="Genomic_DNA"/>
</dbReference>
<dbReference type="PIR" id="E49897">
    <property type="entry name" value="E49897"/>
</dbReference>
<dbReference type="RefSeq" id="WP_011053790.1">
    <property type="nucleotide sequence ID" value="NC_004061.1"/>
</dbReference>
<dbReference type="STRING" id="198804.BUsg_265"/>
<dbReference type="GeneID" id="93003735"/>
<dbReference type="KEGG" id="bas:BUsg_265"/>
<dbReference type="eggNOG" id="ENOG502Z96Y">
    <property type="taxonomic scope" value="Bacteria"/>
</dbReference>
<dbReference type="HOGENOM" id="CLU_073287_0_0_6"/>
<dbReference type="Proteomes" id="UP000000416">
    <property type="component" value="Chromosome"/>
</dbReference>
<dbReference type="GO" id="GO:0005886">
    <property type="term" value="C:plasma membrane"/>
    <property type="evidence" value="ECO:0007669"/>
    <property type="project" value="UniProtKB-SubCell"/>
</dbReference>
<dbReference type="HAMAP" id="MF_01067">
    <property type="entry name" value="UPF0259"/>
    <property type="match status" value="1"/>
</dbReference>
<dbReference type="InterPro" id="IPR009627">
    <property type="entry name" value="UPF0259"/>
</dbReference>
<dbReference type="NCBIfam" id="NF002774">
    <property type="entry name" value="PRK02868.1"/>
    <property type="match status" value="1"/>
</dbReference>
<dbReference type="Pfam" id="PF06790">
    <property type="entry name" value="UPF0259"/>
    <property type="match status" value="1"/>
</dbReference>